<organism>
    <name type="scientific">Thermotoga maritima (strain ATCC 43589 / DSM 3109 / JCM 10099 / NBRC 100826 / MSB8)</name>
    <dbReference type="NCBI Taxonomy" id="243274"/>
    <lineage>
        <taxon>Bacteria</taxon>
        <taxon>Thermotogati</taxon>
        <taxon>Thermotogota</taxon>
        <taxon>Thermotogae</taxon>
        <taxon>Thermotogales</taxon>
        <taxon>Thermotogaceae</taxon>
        <taxon>Thermotoga</taxon>
    </lineage>
</organism>
<proteinExistence type="evidence at protein level"/>
<accession>Q9WYW0</accession>
<reference key="1">
    <citation type="journal article" date="1999" name="Nature">
        <title>Evidence for lateral gene transfer between Archaea and Bacteria from genome sequence of Thermotoga maritima.</title>
        <authorList>
            <person name="Nelson K.E."/>
            <person name="Clayton R.A."/>
            <person name="Gill S.R."/>
            <person name="Gwinn M.L."/>
            <person name="Dodson R.J."/>
            <person name="Haft D.H."/>
            <person name="Hickey E.K."/>
            <person name="Peterson J.D."/>
            <person name="Nelson W.C."/>
            <person name="Ketchum K.A."/>
            <person name="McDonald L.A."/>
            <person name="Utterback T.R."/>
            <person name="Malek J.A."/>
            <person name="Linher K.D."/>
            <person name="Garrett M.M."/>
            <person name="Stewart A.M."/>
            <person name="Cotton M.D."/>
            <person name="Pratt M.S."/>
            <person name="Phillips C.A."/>
            <person name="Richardson D.L."/>
            <person name="Heidelberg J.F."/>
            <person name="Sutton G.G."/>
            <person name="Fleischmann R.D."/>
            <person name="Eisen J.A."/>
            <person name="White O."/>
            <person name="Salzberg S.L."/>
            <person name="Smith H.O."/>
            <person name="Venter J.C."/>
            <person name="Fraser C.M."/>
        </authorList>
    </citation>
    <scope>NUCLEOTIDE SEQUENCE [LARGE SCALE GENOMIC DNA]</scope>
    <source>
        <strain>ATCC 43589 / DSM 3109 / JCM 10099 / NBRC 100826 / MSB8</strain>
    </source>
</reference>
<reference key="2">
    <citation type="journal article" date="2007" name="J. Biol. Chem.">
        <title>N-lysine propionylation controls the activity of propionyl-CoA synthetase.</title>
        <authorList>
            <person name="Garrity J."/>
            <person name="Gardner J.G."/>
            <person name="Hawse W."/>
            <person name="Wolberger C."/>
            <person name="Escalante-Semerena J.C."/>
        </authorList>
    </citation>
    <scope>FUNCTION</scope>
</reference>
<reference evidence="11" key="3">
    <citation type="journal article" date="2005" name="Mol. Cell">
        <title>Mechanism of sirtuin inhibition by nicotinamide: altering the NAD(+) cosubstrate specificity of a Sir2 enzyme.</title>
        <authorList>
            <person name="Avalos J.L."/>
            <person name="Bever K.M."/>
            <person name="Wolberger C."/>
        </authorList>
    </citation>
    <scope>X-RAY CRYSTALLOGRAPHY (1.4 ANGSTROMS) IN COMPLEX WITH NICOTINAMIDE; ZN(2+) AND AN ACETYLATED PEPTIDE SUBSTRATE</scope>
    <scope>CATALYTIC ACTIVITY</scope>
    <scope>ACTIVITY REGULATION</scope>
    <scope>COFACTOR</scope>
    <scope>MUTAGENESIS OF ASP-101</scope>
</reference>
<reference evidence="12 13 14 15 16" key="4">
    <citation type="journal article" date="2006" name="Biochemistry">
        <title>The structural basis of sirtuin substrate affinity.</title>
        <authorList>
            <person name="Cosgrove M.S."/>
            <person name="Bever K."/>
            <person name="Avalos J.L."/>
            <person name="Muhammad S."/>
            <person name="Zhang X."/>
            <person name="Wolberger C."/>
        </authorList>
    </citation>
    <scope>X-RAY CRYSTALLOGRAPHY (1.63 ANGSTROMS) IN COMPLEXES WITH PEPTIDE SUBSTRATES AND ZN(2+)</scope>
    <scope>COFACTOR</scope>
    <scope>MUTAGENESIS OF ASN-165</scope>
</reference>
<reference evidence="17 18 19 20" key="5">
    <citation type="journal article" date="2006" name="Structure">
        <title>Insights into the sirtuin mechanism from ternary complexes containing NAD+ and acetylated peptide.</title>
        <authorList>
            <person name="Hoff K.G."/>
            <person name="Avalos J.L."/>
            <person name="Sens K."/>
            <person name="Wolberger C."/>
        </authorList>
    </citation>
    <scope>X-RAY CRYSTALLOGRAPHY (1.9 ANGSTROMS) OF WILD-TYPE AND MUTANTS TYR-116 AND ALA-116 IN COMPLEXES WITH NAD; ZN(2+); O-ACETYL-ADP-D-RIBOSE AND AN ACETYLATED PEPTIDE SUBSTRATE</scope>
    <scope>FUNCTION</scope>
    <scope>CATALYTIC ACTIVITY</scope>
    <scope>COFACTOR</scope>
    <scope>MUTAGENESIS OF HIS-116</scope>
    <scope>REACTION MECHANISM</scope>
    <scope>ACTIVE SITE</scope>
</reference>
<reference evidence="21 22" key="6">
    <citation type="journal article" date="2008" name="Structure">
        <title>Structural insights into intermediate steps in the Sir2 deacetylation reaction.</title>
        <authorList>
            <person name="Hawse W.F."/>
            <person name="Hoff K.G."/>
            <person name="Fatkins D.G."/>
            <person name="Daines A."/>
            <person name="Zubkova O.V."/>
            <person name="Schramm V.L."/>
            <person name="Zheng W."/>
            <person name="Wolberger C."/>
        </authorList>
    </citation>
    <scope>X-RAY CRYSTALLOGRAPHY (1.9 ANGSTROMS) IN COMPLEXES WITH ZN(2+) AND INTERMEDIATE ANALOGS</scope>
    <scope>MUTAGENESIS OF PHE-33</scope>
</reference>
<reference evidence="23" key="7">
    <citation type="journal article" date="2009" name="J. Biol. Chem.">
        <title>Structure-based mechanism of ADP-ribosylation by sirtuins.</title>
        <authorList>
            <person name="Hawse W.F."/>
            <person name="Wolberger C."/>
        </authorList>
    </citation>
    <scope>X-RAY CRYSTALLOGRAPHY (1.5 ANGSTROMS) IN COMPLEX WITH AN ACETYLATED PEPTIDE AND ZN(2+)</scope>
    <scope>FUNCTION</scope>
    <scope>CHARACTERIZATION OF ADP-RIBOSYLATION ACTIVITY</scope>
</reference>
<reference evidence="24" key="8">
    <citation type="journal article" date="2011" name="Protein Sci.">
        <title>Structure of Sir2Tm bound to a propionylated peptide.</title>
        <authorList>
            <person name="Bheda P."/>
            <person name="Wang J.T."/>
            <person name="Escalante-Semerena J.C."/>
            <person name="Wolberger C."/>
        </authorList>
    </citation>
    <scope>X-RAY CRYSTALLOGRAPHY (1.8 ANGSTROMS) IN COMPLEX WITH ZN(2+) AND A A PROPIONYLATED PEPTIDE</scope>
</reference>
<comment type="function">
    <text evidence="1 5 6 8">NAD-dependent protein deacetylase which modulates the activities of several enzymes which are inactive in their acetylated form. Also has depropionylation activity in vitro. Also able to ADP-ribosylate peptide substrates with Arg or Lys in the +2 position. The role of this function in vivo is not clear.</text>
</comment>
<comment type="catalytic activity">
    <reaction evidence="1 3 5">
        <text>N(6)-acetyl-L-lysyl-[protein] + NAD(+) + H2O = 2''-O-acetyl-ADP-D-ribose + nicotinamide + L-lysyl-[protein]</text>
        <dbReference type="Rhea" id="RHEA:43636"/>
        <dbReference type="Rhea" id="RHEA-COMP:9752"/>
        <dbReference type="Rhea" id="RHEA-COMP:10731"/>
        <dbReference type="ChEBI" id="CHEBI:15377"/>
        <dbReference type="ChEBI" id="CHEBI:17154"/>
        <dbReference type="ChEBI" id="CHEBI:29969"/>
        <dbReference type="ChEBI" id="CHEBI:57540"/>
        <dbReference type="ChEBI" id="CHEBI:61930"/>
        <dbReference type="ChEBI" id="CHEBI:83767"/>
        <dbReference type="EC" id="2.3.1.286"/>
    </reaction>
</comment>
<comment type="cofactor">
    <cofactor evidence="1 3 4 5">
        <name>Zn(2+)</name>
        <dbReference type="ChEBI" id="CHEBI:29105"/>
    </cofactor>
    <text evidence="1 3 4 5">Binds 1 zinc ion per subunit.</text>
</comment>
<comment type="activity regulation">
    <text evidence="3">Non-competitively inhibited by nicotinamide in vitro and in vivo, but not by nicotinic acid. Nicotinamide inhibits the deacetylation activity by reacting with a reaction intermediate.</text>
</comment>
<comment type="subcellular location">
    <subcellularLocation>
        <location evidence="1">Cytoplasm</location>
    </subcellularLocation>
</comment>
<comment type="similarity">
    <text evidence="1">Belongs to the sirtuin family. Class U subfamily.</text>
</comment>
<keyword id="KW-0002">3D-structure</keyword>
<keyword id="KW-0963">Cytoplasm</keyword>
<keyword id="KW-0479">Metal-binding</keyword>
<keyword id="KW-0520">NAD</keyword>
<keyword id="KW-1185">Reference proteome</keyword>
<keyword id="KW-0808">Transferase</keyword>
<keyword id="KW-0862">Zinc</keyword>
<gene>
    <name evidence="1" type="primary">cobB</name>
    <name type="synonym">sir2</name>
    <name type="ordered locus">TM_0490</name>
</gene>
<sequence length="246" mass="27538">MKMKEFLDLLNESRLTVTLTGAGISTPSGIPDFRGPNGIYKKYSQNVFDIDFFYSHPEEFYRFAKEGIFPMLQAKPNLAHVLLAKLEEKGLIEAVITQNIDRLHQRAGSKKVIELHGNVEEYYCVRCEKKYTVEDVIKKLESSDVPLCDDCNSLIRPNIVFFGENLPQDALREAIGLSSRASLMIVLGSSLVVYPAAELPLITVRSGGKLVIVNLGETPFDDIATLKYNMDVVEFARRVMEEGGIS</sequence>
<name>NPD_THEMA</name>
<evidence type="ECO:0000255" key="1">
    <source>
        <dbReference type="HAMAP-Rule" id="MF_01968"/>
    </source>
</evidence>
<evidence type="ECO:0000255" key="2">
    <source>
        <dbReference type="PROSITE-ProRule" id="PRU00236"/>
    </source>
</evidence>
<evidence type="ECO:0000269" key="3">
    <source>
    </source>
</evidence>
<evidence type="ECO:0000269" key="4">
    <source>
    </source>
</evidence>
<evidence type="ECO:0000269" key="5">
    <source>
    </source>
</evidence>
<evidence type="ECO:0000269" key="6">
    <source>
    </source>
</evidence>
<evidence type="ECO:0000269" key="7">
    <source>
    </source>
</evidence>
<evidence type="ECO:0000269" key="8">
    <source>
    </source>
</evidence>
<evidence type="ECO:0000269" key="9">
    <source>
    </source>
</evidence>
<evidence type="ECO:0000305" key="10">
    <source>
    </source>
</evidence>
<evidence type="ECO:0007744" key="11">
    <source>
        <dbReference type="PDB" id="1YC5"/>
    </source>
</evidence>
<evidence type="ECO:0007744" key="12">
    <source>
        <dbReference type="PDB" id="2H2D"/>
    </source>
</evidence>
<evidence type="ECO:0007744" key="13">
    <source>
        <dbReference type="PDB" id="2H2F"/>
    </source>
</evidence>
<evidence type="ECO:0007744" key="14">
    <source>
        <dbReference type="PDB" id="2H2G"/>
    </source>
</evidence>
<evidence type="ECO:0007744" key="15">
    <source>
        <dbReference type="PDB" id="2H2H"/>
    </source>
</evidence>
<evidence type="ECO:0007744" key="16">
    <source>
        <dbReference type="PDB" id="2H2I"/>
    </source>
</evidence>
<evidence type="ECO:0007744" key="17">
    <source>
        <dbReference type="PDB" id="2H4F"/>
    </source>
</evidence>
<evidence type="ECO:0007744" key="18">
    <source>
        <dbReference type="PDB" id="2H4H"/>
    </source>
</evidence>
<evidence type="ECO:0007744" key="19">
    <source>
        <dbReference type="PDB" id="2H4J"/>
    </source>
</evidence>
<evidence type="ECO:0007744" key="20">
    <source>
        <dbReference type="PDB" id="2H59"/>
    </source>
</evidence>
<evidence type="ECO:0007744" key="21">
    <source>
        <dbReference type="PDB" id="3D4B"/>
    </source>
</evidence>
<evidence type="ECO:0007744" key="22">
    <source>
        <dbReference type="PDB" id="3D81"/>
    </source>
</evidence>
<evidence type="ECO:0007744" key="23">
    <source>
        <dbReference type="PDB" id="3JR3"/>
    </source>
</evidence>
<evidence type="ECO:0007744" key="24">
    <source>
        <dbReference type="PDB" id="3PDH"/>
    </source>
</evidence>
<evidence type="ECO:0007829" key="25">
    <source>
        <dbReference type="PDB" id="1YC5"/>
    </source>
</evidence>
<evidence type="ECO:0007829" key="26">
    <source>
        <dbReference type="PDB" id="2H2I"/>
    </source>
</evidence>
<evidence type="ECO:0007829" key="27">
    <source>
        <dbReference type="PDB" id="2H59"/>
    </source>
</evidence>
<evidence type="ECO:0007829" key="28">
    <source>
        <dbReference type="PDB" id="3D81"/>
    </source>
</evidence>
<evidence type="ECO:0007829" key="29">
    <source>
        <dbReference type="PDB" id="3JR3"/>
    </source>
</evidence>
<feature type="chain" id="PRO_0000110362" description="NAD-dependent protein deacetylase">
    <location>
        <begin position="1"/>
        <end position="246"/>
    </location>
</feature>
<feature type="domain" description="Deacetylase sirtuin-type" evidence="2">
    <location>
        <begin position="1"/>
        <end position="246"/>
    </location>
</feature>
<feature type="active site" description="Proton acceptor" evidence="10">
    <location>
        <position position="116"/>
    </location>
</feature>
<feature type="binding site" evidence="5 17">
    <location>
        <position position="22"/>
    </location>
    <ligand>
        <name>NAD(+)</name>
        <dbReference type="ChEBI" id="CHEBI:57540"/>
    </ligand>
</feature>
<feature type="binding site" evidence="5 17">
    <location>
        <position position="26"/>
    </location>
    <ligand>
        <name>NAD(+)</name>
        <dbReference type="ChEBI" id="CHEBI:57540"/>
    </ligand>
</feature>
<feature type="binding site" evidence="5 17">
    <location>
        <position position="33"/>
    </location>
    <ligand>
        <name>NAD(+)</name>
        <dbReference type="ChEBI" id="CHEBI:57540"/>
    </ligand>
</feature>
<feature type="binding site" evidence="3 11">
    <location>
        <position position="33"/>
    </location>
    <ligand>
        <name>nicotinamide</name>
        <dbReference type="ChEBI" id="CHEBI:17154"/>
    </ligand>
</feature>
<feature type="binding site" evidence="5 17">
    <location>
        <position position="34"/>
    </location>
    <ligand>
        <name>NAD(+)</name>
        <dbReference type="ChEBI" id="CHEBI:57540"/>
    </ligand>
</feature>
<feature type="binding site" evidence="5 17">
    <location>
        <position position="98"/>
    </location>
    <ligand>
        <name>NAD(+)</name>
        <dbReference type="ChEBI" id="CHEBI:57540"/>
    </ligand>
</feature>
<feature type="binding site" evidence="5 17">
    <location>
        <position position="100"/>
    </location>
    <ligand>
        <name>NAD(+)</name>
        <dbReference type="ChEBI" id="CHEBI:57540"/>
    </ligand>
</feature>
<feature type="binding site" evidence="3 11">
    <location>
        <position position="100"/>
    </location>
    <ligand>
        <name>nicotinamide</name>
        <dbReference type="ChEBI" id="CHEBI:17154"/>
    </ligand>
</feature>
<feature type="binding site" evidence="5 17">
    <location>
        <position position="101"/>
    </location>
    <ligand>
        <name>NAD(+)</name>
        <dbReference type="ChEBI" id="CHEBI:57540"/>
    </ligand>
</feature>
<feature type="binding site" evidence="3 11">
    <location>
        <position position="101"/>
    </location>
    <ligand>
        <name>nicotinamide</name>
        <dbReference type="ChEBI" id="CHEBI:17154"/>
    </ligand>
</feature>
<feature type="binding site" evidence="5 17">
    <location>
        <position position="116"/>
    </location>
    <ligand>
        <name>NAD(+)</name>
        <dbReference type="ChEBI" id="CHEBI:57540"/>
    </ligand>
</feature>
<feature type="binding site" evidence="3 4 5 7 8 9 11 12 17 21 23 24">
    <location>
        <position position="124"/>
    </location>
    <ligand>
        <name>Zn(2+)</name>
        <dbReference type="ChEBI" id="CHEBI:29105"/>
    </ligand>
</feature>
<feature type="binding site" evidence="3 4 5 7 8 9 11 12 17 21 23 24">
    <location>
        <position position="127"/>
    </location>
    <ligand>
        <name>Zn(2+)</name>
        <dbReference type="ChEBI" id="CHEBI:29105"/>
    </ligand>
</feature>
<feature type="binding site" evidence="3 4 5 7 8 9 11 12 17 21 23 24">
    <location>
        <position position="148"/>
    </location>
    <ligand>
        <name>Zn(2+)</name>
        <dbReference type="ChEBI" id="CHEBI:29105"/>
    </ligand>
</feature>
<feature type="binding site" evidence="3 4 5 7 8 9 11 12 17 21 23 24">
    <location>
        <position position="151"/>
    </location>
    <ligand>
        <name>Zn(2+)</name>
        <dbReference type="ChEBI" id="CHEBI:29105"/>
    </ligand>
</feature>
<feature type="binding site" evidence="5 17">
    <location>
        <position position="189"/>
    </location>
    <ligand>
        <name>NAD(+)</name>
        <dbReference type="ChEBI" id="CHEBI:57540"/>
    </ligand>
</feature>
<feature type="binding site" evidence="5 17">
    <location>
        <position position="190"/>
    </location>
    <ligand>
        <name>NAD(+)</name>
        <dbReference type="ChEBI" id="CHEBI:57540"/>
    </ligand>
</feature>
<feature type="binding site" evidence="5 17">
    <location>
        <position position="214"/>
    </location>
    <ligand>
        <name>NAD(+)</name>
        <dbReference type="ChEBI" id="CHEBI:57540"/>
    </ligand>
</feature>
<feature type="binding site" evidence="5 17">
    <location>
        <position position="215"/>
    </location>
    <ligand>
        <name>NAD(+)</name>
        <dbReference type="ChEBI" id="CHEBI:57540"/>
    </ligand>
</feature>
<feature type="binding site" evidence="5 17">
    <location>
        <position position="216"/>
    </location>
    <ligand>
        <name>NAD(+)</name>
        <dbReference type="ChEBI" id="CHEBI:57540"/>
    </ligand>
</feature>
<feature type="binding site" evidence="5 17">
    <location>
        <position position="231"/>
    </location>
    <ligand>
        <name>NAD(+)</name>
        <dbReference type="ChEBI" id="CHEBI:57540"/>
    </ligand>
</feature>
<feature type="binding site" evidence="5 17">
    <location>
        <position position="232"/>
    </location>
    <ligand>
        <name>NAD(+)</name>
        <dbReference type="ChEBI" id="CHEBI:57540"/>
    </ligand>
</feature>
<feature type="mutagenesis site" description="Reduces kcat for NAD(+), greatly increases sensitivity to nicotinamide inhibition." evidence="7">
    <original>F</original>
    <variation>A</variation>
    <location>
        <position position="33"/>
    </location>
</feature>
<feature type="mutagenesis site" description="Alters cosubstrate specificity, decreases Km for NAD(+), enzyme unable to discriminate between NAD(+) and nicotinic acid adenine dinucleotide (NAAD)." evidence="3">
    <original>D</original>
    <variation>N</variation>
    <location>
        <position position="101"/>
    </location>
</feature>
<feature type="mutagenesis site" description="2-fold decrease in turnover and peptide affinity." evidence="5">
    <original>H</original>
    <variation>A</variation>
    <location>
        <position position="116"/>
    </location>
</feature>
<feature type="mutagenesis site" description="10-fold decrease in turnover and peptide affinity." evidence="5">
    <original>H</original>
    <variation>Y</variation>
    <location>
        <position position="116"/>
    </location>
</feature>
<feature type="mutagenesis site" description="Increased affinity for substrate peptides with a lysine or arginine at position -1." evidence="4">
    <original>N</original>
    <variation>D</variation>
    <location>
        <position position="165"/>
    </location>
</feature>
<feature type="helix" evidence="25">
    <location>
        <begin position="4"/>
        <end position="12"/>
    </location>
</feature>
<feature type="strand" evidence="25">
    <location>
        <begin position="14"/>
        <end position="20"/>
    </location>
</feature>
<feature type="helix" evidence="25">
    <location>
        <begin position="22"/>
        <end position="24"/>
    </location>
</feature>
<feature type="helix" evidence="25">
    <location>
        <begin position="26"/>
        <end position="28"/>
    </location>
</feature>
<feature type="strand" evidence="27">
    <location>
        <begin position="33"/>
        <end position="35"/>
    </location>
</feature>
<feature type="helix" evidence="26">
    <location>
        <begin position="38"/>
        <end position="42"/>
    </location>
</feature>
<feature type="turn" evidence="29">
    <location>
        <begin position="45"/>
        <end position="48"/>
    </location>
</feature>
<feature type="helix" evidence="25">
    <location>
        <begin position="50"/>
        <end position="55"/>
    </location>
</feature>
<feature type="helix" evidence="25">
    <location>
        <begin position="57"/>
        <end position="67"/>
    </location>
</feature>
<feature type="helix" evidence="25">
    <location>
        <begin position="69"/>
        <end position="73"/>
    </location>
</feature>
<feature type="helix" evidence="25">
    <location>
        <begin position="78"/>
        <end position="88"/>
    </location>
</feature>
<feature type="strand" evidence="25">
    <location>
        <begin position="93"/>
        <end position="97"/>
    </location>
</feature>
<feature type="helix" evidence="25">
    <location>
        <begin position="103"/>
        <end position="106"/>
    </location>
</feature>
<feature type="strand" evidence="25">
    <location>
        <begin position="112"/>
        <end position="114"/>
    </location>
</feature>
<feature type="strand" evidence="25">
    <location>
        <begin position="117"/>
        <end position="124"/>
    </location>
</feature>
<feature type="turn" evidence="25">
    <location>
        <begin position="125"/>
        <end position="127"/>
    </location>
</feature>
<feature type="strand" evidence="25">
    <location>
        <begin position="130"/>
        <end position="132"/>
    </location>
</feature>
<feature type="helix" evidence="25">
    <location>
        <begin position="133"/>
        <end position="139"/>
    </location>
</feature>
<feature type="turn" evidence="25">
    <location>
        <begin position="140"/>
        <end position="142"/>
    </location>
</feature>
<feature type="strand" evidence="28">
    <location>
        <begin position="143"/>
        <end position="145"/>
    </location>
</feature>
<feature type="turn" evidence="25">
    <location>
        <begin position="149"/>
        <end position="151"/>
    </location>
</feature>
<feature type="strand" evidence="25">
    <location>
        <begin position="154"/>
        <end position="159"/>
    </location>
</feature>
<feature type="helix" evidence="25">
    <location>
        <begin position="168"/>
        <end position="180"/>
    </location>
</feature>
<feature type="strand" evidence="25">
    <location>
        <begin position="182"/>
        <end position="188"/>
    </location>
</feature>
<feature type="helix" evidence="25">
    <location>
        <begin position="196"/>
        <end position="198"/>
    </location>
</feature>
<feature type="helix" evidence="25">
    <location>
        <begin position="199"/>
        <end position="206"/>
    </location>
</feature>
<feature type="strand" evidence="25">
    <location>
        <begin position="209"/>
        <end position="213"/>
    </location>
</feature>
<feature type="helix" evidence="25">
    <location>
        <begin position="221"/>
        <end position="223"/>
    </location>
</feature>
<feature type="strand" evidence="25">
    <location>
        <begin position="225"/>
        <end position="228"/>
    </location>
</feature>
<feature type="helix" evidence="25">
    <location>
        <begin position="232"/>
        <end position="243"/>
    </location>
</feature>
<dbReference type="EC" id="2.3.1.286" evidence="1 3 5"/>
<dbReference type="EMBL" id="AE000512">
    <property type="protein sequence ID" value="AAD35575.1"/>
    <property type="molecule type" value="Genomic_DNA"/>
</dbReference>
<dbReference type="PIR" id="A72370">
    <property type="entry name" value="A72370"/>
</dbReference>
<dbReference type="RefSeq" id="NP_228300.1">
    <property type="nucleotide sequence ID" value="NC_000853.1"/>
</dbReference>
<dbReference type="PDB" id="1YC5">
    <property type="method" value="X-ray"/>
    <property type="resolution" value="1.40 A"/>
    <property type="chains" value="A=1-246"/>
</dbReference>
<dbReference type="PDB" id="2H2D">
    <property type="method" value="X-ray"/>
    <property type="resolution" value="1.70 A"/>
    <property type="chains" value="A=1-246"/>
</dbReference>
<dbReference type="PDB" id="2H2F">
    <property type="method" value="X-ray"/>
    <property type="resolution" value="2.20 A"/>
    <property type="chains" value="A=1-246"/>
</dbReference>
<dbReference type="PDB" id="2H2G">
    <property type="method" value="X-ray"/>
    <property type="resolution" value="1.63 A"/>
    <property type="chains" value="A=1-246"/>
</dbReference>
<dbReference type="PDB" id="2H2H">
    <property type="method" value="X-ray"/>
    <property type="resolution" value="2.20 A"/>
    <property type="chains" value="A=1-246"/>
</dbReference>
<dbReference type="PDB" id="2H2I">
    <property type="method" value="X-ray"/>
    <property type="resolution" value="1.80 A"/>
    <property type="chains" value="A=1-246"/>
</dbReference>
<dbReference type="PDB" id="2H4F">
    <property type="method" value="X-ray"/>
    <property type="resolution" value="2.00 A"/>
    <property type="chains" value="A=1-246"/>
</dbReference>
<dbReference type="PDB" id="2H4H">
    <property type="method" value="X-ray"/>
    <property type="resolution" value="1.99 A"/>
    <property type="chains" value="A=1-246"/>
</dbReference>
<dbReference type="PDB" id="2H4J">
    <property type="method" value="X-ray"/>
    <property type="resolution" value="2.10 A"/>
    <property type="chains" value="A=1-246"/>
</dbReference>
<dbReference type="PDB" id="2H59">
    <property type="method" value="X-ray"/>
    <property type="resolution" value="1.90 A"/>
    <property type="chains" value="A/B=1-246"/>
</dbReference>
<dbReference type="PDB" id="3D4B">
    <property type="method" value="X-ray"/>
    <property type="resolution" value="1.90 A"/>
    <property type="chains" value="A=1-246"/>
</dbReference>
<dbReference type="PDB" id="3D81">
    <property type="method" value="X-ray"/>
    <property type="resolution" value="2.50 A"/>
    <property type="chains" value="A=1-246"/>
</dbReference>
<dbReference type="PDB" id="3JR3">
    <property type="method" value="X-ray"/>
    <property type="resolution" value="1.50 A"/>
    <property type="chains" value="A=1-246"/>
</dbReference>
<dbReference type="PDB" id="3PDH">
    <property type="method" value="X-ray"/>
    <property type="resolution" value="1.80 A"/>
    <property type="chains" value="A=1-246"/>
</dbReference>
<dbReference type="PDB" id="4BUZ">
    <property type="method" value="X-ray"/>
    <property type="resolution" value="1.90 A"/>
    <property type="chains" value="A=1-246"/>
</dbReference>
<dbReference type="PDB" id="4BV2">
    <property type="method" value="X-ray"/>
    <property type="resolution" value="3.30 A"/>
    <property type="chains" value="A/B=1-246"/>
</dbReference>
<dbReference type="PDBsum" id="1YC5"/>
<dbReference type="PDBsum" id="2H2D"/>
<dbReference type="PDBsum" id="2H2F"/>
<dbReference type="PDBsum" id="2H2G"/>
<dbReference type="PDBsum" id="2H2H"/>
<dbReference type="PDBsum" id="2H2I"/>
<dbReference type="PDBsum" id="2H4F"/>
<dbReference type="PDBsum" id="2H4H"/>
<dbReference type="PDBsum" id="2H4J"/>
<dbReference type="PDBsum" id="2H59"/>
<dbReference type="PDBsum" id="3D4B"/>
<dbReference type="PDBsum" id="3D81"/>
<dbReference type="PDBsum" id="3JR3"/>
<dbReference type="PDBsum" id="3PDH"/>
<dbReference type="PDBsum" id="4BUZ"/>
<dbReference type="PDBsum" id="4BV2"/>
<dbReference type="SMR" id="Q9WYW0"/>
<dbReference type="DIP" id="DIP-29141N"/>
<dbReference type="FunCoup" id="Q9WYW0">
    <property type="interactions" value="273"/>
</dbReference>
<dbReference type="IntAct" id="Q9WYW0">
    <property type="interactions" value="1"/>
</dbReference>
<dbReference type="STRING" id="243274.TM_0490"/>
<dbReference type="ChEMBL" id="CHEMBL3217404"/>
<dbReference type="PaxDb" id="243274-THEMA_02220"/>
<dbReference type="DNASU" id="897531"/>
<dbReference type="EnsemblBacteria" id="AAD35575">
    <property type="protein sequence ID" value="AAD35575"/>
    <property type="gene ID" value="TM_0490"/>
</dbReference>
<dbReference type="KEGG" id="tma:TM0490"/>
<dbReference type="PATRIC" id="fig|243274.5.peg.497"/>
<dbReference type="eggNOG" id="COG0846">
    <property type="taxonomic scope" value="Bacteria"/>
</dbReference>
<dbReference type="InParanoid" id="Q9WYW0"/>
<dbReference type="OrthoDB" id="9800582at2"/>
<dbReference type="BRENDA" id="2.3.1.286">
    <property type="organism ID" value="6331"/>
</dbReference>
<dbReference type="EvolutionaryTrace" id="Q9WYW0"/>
<dbReference type="PRO" id="PR:Q9WYW0"/>
<dbReference type="Proteomes" id="UP000008183">
    <property type="component" value="Chromosome"/>
</dbReference>
<dbReference type="GO" id="GO:0005737">
    <property type="term" value="C:cytoplasm"/>
    <property type="evidence" value="ECO:0007669"/>
    <property type="project" value="UniProtKB-SubCell"/>
</dbReference>
<dbReference type="GO" id="GO:0017136">
    <property type="term" value="F:histone deacetylase activity, NAD-dependent"/>
    <property type="evidence" value="ECO:0000318"/>
    <property type="project" value="GO_Central"/>
</dbReference>
<dbReference type="GO" id="GO:0070403">
    <property type="term" value="F:NAD+ binding"/>
    <property type="evidence" value="ECO:0000318"/>
    <property type="project" value="GO_Central"/>
</dbReference>
<dbReference type="GO" id="GO:0008270">
    <property type="term" value="F:zinc ion binding"/>
    <property type="evidence" value="ECO:0007669"/>
    <property type="project" value="UniProtKB-UniRule"/>
</dbReference>
<dbReference type="CDD" id="cd01413">
    <property type="entry name" value="SIR2_Af2"/>
    <property type="match status" value="1"/>
</dbReference>
<dbReference type="Gene3D" id="3.30.1600.10">
    <property type="entry name" value="SIR2/SIRT2 'Small Domain"/>
    <property type="match status" value="1"/>
</dbReference>
<dbReference type="Gene3D" id="3.40.50.1220">
    <property type="entry name" value="TPP-binding domain"/>
    <property type="match status" value="1"/>
</dbReference>
<dbReference type="HAMAP" id="MF_01968">
    <property type="entry name" value="Sirtuin_ClassU"/>
    <property type="match status" value="1"/>
</dbReference>
<dbReference type="IDEAL" id="IID90011"/>
<dbReference type="InterPro" id="IPR029035">
    <property type="entry name" value="DHS-like_NAD/FAD-binding_dom"/>
</dbReference>
<dbReference type="InterPro" id="IPR050134">
    <property type="entry name" value="NAD-dep_sirtuin_deacylases"/>
</dbReference>
<dbReference type="InterPro" id="IPR003000">
    <property type="entry name" value="Sirtuin"/>
</dbReference>
<dbReference type="InterPro" id="IPR026591">
    <property type="entry name" value="Sirtuin_cat_small_dom_sf"/>
</dbReference>
<dbReference type="InterPro" id="IPR028628">
    <property type="entry name" value="Sirtuin_class_U"/>
</dbReference>
<dbReference type="InterPro" id="IPR026590">
    <property type="entry name" value="Ssirtuin_cat_dom"/>
</dbReference>
<dbReference type="NCBIfam" id="NF001752">
    <property type="entry name" value="PRK00481.1-1"/>
    <property type="match status" value="1"/>
</dbReference>
<dbReference type="NCBIfam" id="NF001753">
    <property type="entry name" value="PRK00481.1-3"/>
    <property type="match status" value="1"/>
</dbReference>
<dbReference type="NCBIfam" id="NF010736">
    <property type="entry name" value="PRK14138.1"/>
    <property type="match status" value="1"/>
</dbReference>
<dbReference type="PANTHER" id="PTHR11085:SF4">
    <property type="entry name" value="NAD-DEPENDENT PROTEIN DEACYLASE"/>
    <property type="match status" value="1"/>
</dbReference>
<dbReference type="PANTHER" id="PTHR11085">
    <property type="entry name" value="NAD-DEPENDENT PROTEIN DEACYLASE SIRTUIN-5, MITOCHONDRIAL-RELATED"/>
    <property type="match status" value="1"/>
</dbReference>
<dbReference type="Pfam" id="PF02146">
    <property type="entry name" value="SIR2"/>
    <property type="match status" value="1"/>
</dbReference>
<dbReference type="SUPFAM" id="SSF52467">
    <property type="entry name" value="DHS-like NAD/FAD-binding domain"/>
    <property type="match status" value="1"/>
</dbReference>
<dbReference type="PROSITE" id="PS50305">
    <property type="entry name" value="SIRTUIN"/>
    <property type="match status" value="1"/>
</dbReference>
<protein>
    <recommendedName>
        <fullName evidence="1">NAD-dependent protein deacetylase</fullName>
        <ecNumber evidence="1 3 5">2.3.1.286</ecNumber>
    </recommendedName>
    <alternativeName>
        <fullName evidence="1">Regulatory protein SIR2 homolog</fullName>
        <shortName>Sir2Tm</shortName>
    </alternativeName>
</protein>